<comment type="function">
    <text evidence="1">Acts as a radical domain for damaged PFL and possibly other radical proteins.</text>
</comment>
<protein>
    <recommendedName>
        <fullName evidence="1">Autonomous glycyl radical cofactor</fullName>
    </recommendedName>
</protein>
<name>GRCA_SERLI</name>
<sequence length="127" mass="14375">MITGIQITKANDQALVNSFWLLDDEKAEARCVCANGQYAEDQVVAVSDLGQIEYREVPLEMQPTVRVEGGQHLNVNVLRRETLEDAVKHPEKYPQLTIRVSGYAVRFNSLTPEQQRDVIARTFTESL</sequence>
<proteinExistence type="evidence at transcript level"/>
<organism>
    <name type="scientific">Serratia liquefaciens</name>
    <dbReference type="NCBI Taxonomy" id="614"/>
    <lineage>
        <taxon>Bacteria</taxon>
        <taxon>Pseudomonadati</taxon>
        <taxon>Pseudomonadota</taxon>
        <taxon>Gammaproteobacteria</taxon>
        <taxon>Enterobacterales</taxon>
        <taxon>Yersiniaceae</taxon>
        <taxon>Serratia</taxon>
    </lineage>
</organism>
<reference key="1">
    <citation type="journal article" date="1992" name="Mol. Microbiol.">
        <title>Expression of extracellular phospholipase from Serratia liquefaciens is growth-phase-dependent, catabolite-repressed and regulated by anaerobiosis.</title>
        <authorList>
            <person name="Givskov M."/>
            <person name="Molin S."/>
        </authorList>
    </citation>
    <scope>NUCLEOTIDE SEQUENCE [GENOMIC DNA]</scope>
</reference>
<reference key="2">
    <citation type="journal article" date="1988" name="J. Bacteriol.">
        <title>Cloning and expression in Escherichia coli of the gene for extracellular phospholipase A1 from Serratia liquefaciens.</title>
        <authorList>
            <person name="Givskov M."/>
            <person name="Olsen L."/>
            <person name="Molin S."/>
        </authorList>
    </citation>
    <scope>NUCLEOTIDE SEQUENCE [GENOMIC DNA] OF 21-127</scope>
</reference>
<accession>P18953</accession>
<gene>
    <name evidence="1" type="primary">grcA</name>
</gene>
<keyword id="KW-0556">Organic radical</keyword>
<dbReference type="EMBL" id="X66505">
    <property type="protein sequence ID" value="CAA47136.1"/>
    <property type="molecule type" value="Genomic_DNA"/>
</dbReference>
<dbReference type="EMBL" id="M23640">
    <property type="status" value="NOT_ANNOTATED_CDS"/>
    <property type="molecule type" value="mRNA"/>
</dbReference>
<dbReference type="PIR" id="S22666">
    <property type="entry name" value="S22666"/>
</dbReference>
<dbReference type="SMR" id="P18953"/>
<dbReference type="STRING" id="614.XJ20_04310"/>
<dbReference type="GO" id="GO:0005829">
    <property type="term" value="C:cytosol"/>
    <property type="evidence" value="ECO:0007669"/>
    <property type="project" value="TreeGrafter"/>
</dbReference>
<dbReference type="GO" id="GO:0008861">
    <property type="term" value="F:formate C-acetyltransferase activity"/>
    <property type="evidence" value="ECO:0007669"/>
    <property type="project" value="TreeGrafter"/>
</dbReference>
<dbReference type="FunFam" id="3.20.70.20:FF:000002">
    <property type="entry name" value="Autonomous glycyl radical cofactor"/>
    <property type="match status" value="1"/>
</dbReference>
<dbReference type="Gene3D" id="3.20.70.20">
    <property type="match status" value="1"/>
</dbReference>
<dbReference type="HAMAP" id="MF_00806">
    <property type="entry name" value="GrcA"/>
    <property type="match status" value="1"/>
</dbReference>
<dbReference type="InterPro" id="IPR050244">
    <property type="entry name" value="Auton_GlycylRad_Cofactor"/>
</dbReference>
<dbReference type="InterPro" id="IPR019777">
    <property type="entry name" value="Form_AcTrfase_GR_CS"/>
</dbReference>
<dbReference type="InterPro" id="IPR001150">
    <property type="entry name" value="Gly_radical"/>
</dbReference>
<dbReference type="InterPro" id="IPR011140">
    <property type="entry name" value="Glycyl_radical_cofactor_GrcA"/>
</dbReference>
<dbReference type="NCBIfam" id="TIGR04365">
    <property type="entry name" value="spare_glycyl"/>
    <property type="match status" value="1"/>
</dbReference>
<dbReference type="PANTHER" id="PTHR30191">
    <property type="entry name" value="FORMATE ACETYLTRANSFERASE"/>
    <property type="match status" value="1"/>
</dbReference>
<dbReference type="PANTHER" id="PTHR30191:SF0">
    <property type="entry name" value="FORMATE ACETYLTRANSFERASE 1"/>
    <property type="match status" value="1"/>
</dbReference>
<dbReference type="Pfam" id="PF01228">
    <property type="entry name" value="Gly_radical"/>
    <property type="match status" value="1"/>
</dbReference>
<dbReference type="PIRSF" id="PIRSF000378">
    <property type="entry name" value="Gly_radicl_yfiD"/>
    <property type="match status" value="1"/>
</dbReference>
<dbReference type="SUPFAM" id="SSF51998">
    <property type="entry name" value="PFL-like glycyl radical enzymes"/>
    <property type="match status" value="1"/>
</dbReference>
<dbReference type="PROSITE" id="PS00850">
    <property type="entry name" value="GLY_RADICAL_1"/>
    <property type="match status" value="1"/>
</dbReference>
<dbReference type="PROSITE" id="PS51149">
    <property type="entry name" value="GLY_RADICAL_2"/>
    <property type="match status" value="1"/>
</dbReference>
<evidence type="ECO:0000255" key="1">
    <source>
        <dbReference type="HAMAP-Rule" id="MF_00806"/>
    </source>
</evidence>
<evidence type="ECO:0000305" key="2"/>
<feature type="chain" id="PRO_0000166709" description="Autonomous glycyl radical cofactor">
    <location>
        <begin position="1"/>
        <end position="127"/>
    </location>
</feature>
<feature type="domain" description="Glycine radical" evidence="1">
    <location>
        <begin position="5"/>
        <end position="127"/>
    </location>
</feature>
<feature type="modified residue" description="Glycine radical" evidence="1">
    <location>
        <position position="102"/>
    </location>
</feature>
<feature type="sequence conflict" description="In Ref. 2; M23640." evidence="2" ref="2">
    <original>ARCVCAN</original>
    <variation>VVRMRQ</variation>
    <location>
        <begin position="29"/>
        <end position="35"/>
    </location>
</feature>